<dbReference type="EMBL" id="M34459">
    <property type="protein sequence ID" value="AAA23061.1"/>
    <property type="molecule type" value="Genomic_DNA"/>
</dbReference>
<dbReference type="PIR" id="C37202">
    <property type="entry name" value="C37202"/>
</dbReference>
<organism>
    <name type="scientific">Caldicellulosiruptor saccharolyticus</name>
    <name type="common">Caldocellum saccharolyticum</name>
    <dbReference type="NCBI Taxonomy" id="44001"/>
    <lineage>
        <taxon>Bacteria</taxon>
        <taxon>Bacillati</taxon>
        <taxon>Bacillota</taxon>
        <taxon>Bacillota incertae sedis</taxon>
        <taxon>Caldicellulosiruptorales</taxon>
        <taxon>Caldicellulosiruptoraceae</taxon>
        <taxon>Caldicellulosiruptor</taxon>
    </lineage>
</organism>
<accession>P23554</accession>
<sequence length="97" mass="10731">MVFFFTSCTIQSAIEQKKTVEEILGKIGESEDKTNSRGQPATMKEDEVEDNPLKDVYKDYFLVGAAINGYSVETAAINHPGMAAILKKTLTVQPYLI</sequence>
<evidence type="ECO:0000256" key="1">
    <source>
        <dbReference type="SAM" id="MobiDB-lite"/>
    </source>
</evidence>
<name>YXYB_CALSA</name>
<proteinExistence type="predicted"/>
<feature type="chain" id="PRO_0000066550" description="Uncharacterized 10.7 kDa protein in xynB 3'region">
    <location>
        <begin position="1"/>
        <end position="97"/>
    </location>
</feature>
<feature type="region of interest" description="Disordered" evidence="1">
    <location>
        <begin position="27"/>
        <end position="50"/>
    </location>
</feature>
<protein>
    <recommendedName>
        <fullName>Uncharacterized 10.7 kDa protein in xynB 3'region</fullName>
    </recommendedName>
    <alternativeName>
        <fullName>ORF 3</fullName>
    </alternativeName>
</protein>
<reference key="1">
    <citation type="journal article" date="1990" name="Appl. Environ. Microbiol.">
        <title>Cloning, sequence analysis, and expression of genes encoding xylan-degrading enzymes from the thermophile 'Caldocellum saccharolyticum'.</title>
        <authorList>
            <person name="Luethi E."/>
            <person name="Love D.R."/>
            <person name="McAnulty J."/>
            <person name="Wallace C."/>
            <person name="Caughey P.A."/>
            <person name="Saul D.J."/>
            <person name="Bergquist P.L."/>
        </authorList>
    </citation>
    <scope>NUCLEOTIDE SEQUENCE [GENOMIC DNA]</scope>
</reference>